<organism>
    <name type="scientific">Paraburkholderia xenovorans (strain LB400)</name>
    <dbReference type="NCBI Taxonomy" id="266265"/>
    <lineage>
        <taxon>Bacteria</taxon>
        <taxon>Pseudomonadati</taxon>
        <taxon>Pseudomonadota</taxon>
        <taxon>Betaproteobacteria</taxon>
        <taxon>Burkholderiales</taxon>
        <taxon>Burkholderiaceae</taxon>
        <taxon>Paraburkholderia</taxon>
    </lineage>
</organism>
<protein>
    <recommendedName>
        <fullName evidence="1">2-C-methyl-D-erythritol 2,4-cyclodiphosphate synthase</fullName>
        <shortName evidence="1">MECDP-synthase</shortName>
        <shortName evidence="1">MECPP-synthase</shortName>
        <shortName evidence="1">MECPS</shortName>
        <ecNumber evidence="1">4.6.1.12</ecNumber>
    </recommendedName>
</protein>
<keyword id="KW-0414">Isoprene biosynthesis</keyword>
<keyword id="KW-0456">Lyase</keyword>
<keyword id="KW-0479">Metal-binding</keyword>
<keyword id="KW-1185">Reference proteome</keyword>
<evidence type="ECO:0000255" key="1">
    <source>
        <dbReference type="HAMAP-Rule" id="MF_00107"/>
    </source>
</evidence>
<dbReference type="EC" id="4.6.1.12" evidence="1"/>
<dbReference type="EMBL" id="CP000270">
    <property type="protein sequence ID" value="ABE30659.1"/>
    <property type="molecule type" value="Genomic_DNA"/>
</dbReference>
<dbReference type="RefSeq" id="WP_011488290.1">
    <property type="nucleotide sequence ID" value="NC_007951.1"/>
</dbReference>
<dbReference type="SMR" id="Q13Z30"/>
<dbReference type="STRING" id="266265.Bxe_A2311"/>
<dbReference type="KEGG" id="bxb:DR64_14"/>
<dbReference type="KEGG" id="bxe:Bxe_A2311"/>
<dbReference type="PATRIC" id="fig|266265.5.peg.2221"/>
<dbReference type="eggNOG" id="COG0245">
    <property type="taxonomic scope" value="Bacteria"/>
</dbReference>
<dbReference type="OrthoDB" id="9804336at2"/>
<dbReference type="UniPathway" id="UPA00056">
    <property type="reaction ID" value="UER00095"/>
</dbReference>
<dbReference type="Proteomes" id="UP000001817">
    <property type="component" value="Chromosome 1"/>
</dbReference>
<dbReference type="GO" id="GO:0008685">
    <property type="term" value="F:2-C-methyl-D-erythritol 2,4-cyclodiphosphate synthase activity"/>
    <property type="evidence" value="ECO:0007669"/>
    <property type="project" value="UniProtKB-UniRule"/>
</dbReference>
<dbReference type="GO" id="GO:0046872">
    <property type="term" value="F:metal ion binding"/>
    <property type="evidence" value="ECO:0007669"/>
    <property type="project" value="UniProtKB-KW"/>
</dbReference>
<dbReference type="GO" id="GO:0019288">
    <property type="term" value="P:isopentenyl diphosphate biosynthetic process, methylerythritol 4-phosphate pathway"/>
    <property type="evidence" value="ECO:0007669"/>
    <property type="project" value="UniProtKB-UniRule"/>
</dbReference>
<dbReference type="GO" id="GO:0016114">
    <property type="term" value="P:terpenoid biosynthetic process"/>
    <property type="evidence" value="ECO:0007669"/>
    <property type="project" value="InterPro"/>
</dbReference>
<dbReference type="CDD" id="cd00554">
    <property type="entry name" value="MECDP_synthase"/>
    <property type="match status" value="1"/>
</dbReference>
<dbReference type="FunFam" id="3.30.1330.50:FF:000001">
    <property type="entry name" value="2-C-methyl-D-erythritol 2,4-cyclodiphosphate synthase"/>
    <property type="match status" value="1"/>
</dbReference>
<dbReference type="Gene3D" id="3.30.1330.50">
    <property type="entry name" value="2-C-methyl-D-erythritol 2,4-cyclodiphosphate synthase"/>
    <property type="match status" value="1"/>
</dbReference>
<dbReference type="HAMAP" id="MF_00107">
    <property type="entry name" value="IspF"/>
    <property type="match status" value="1"/>
</dbReference>
<dbReference type="InterPro" id="IPR003526">
    <property type="entry name" value="MECDP_synthase"/>
</dbReference>
<dbReference type="InterPro" id="IPR020555">
    <property type="entry name" value="MECDP_synthase_CS"/>
</dbReference>
<dbReference type="InterPro" id="IPR036571">
    <property type="entry name" value="MECDP_synthase_sf"/>
</dbReference>
<dbReference type="NCBIfam" id="TIGR00151">
    <property type="entry name" value="ispF"/>
    <property type="match status" value="1"/>
</dbReference>
<dbReference type="PANTHER" id="PTHR43181">
    <property type="entry name" value="2-C-METHYL-D-ERYTHRITOL 2,4-CYCLODIPHOSPHATE SYNTHASE, CHLOROPLASTIC"/>
    <property type="match status" value="1"/>
</dbReference>
<dbReference type="PANTHER" id="PTHR43181:SF1">
    <property type="entry name" value="2-C-METHYL-D-ERYTHRITOL 2,4-CYCLODIPHOSPHATE SYNTHASE, CHLOROPLASTIC"/>
    <property type="match status" value="1"/>
</dbReference>
<dbReference type="Pfam" id="PF02542">
    <property type="entry name" value="YgbB"/>
    <property type="match status" value="1"/>
</dbReference>
<dbReference type="SUPFAM" id="SSF69765">
    <property type="entry name" value="IpsF-like"/>
    <property type="match status" value="1"/>
</dbReference>
<dbReference type="PROSITE" id="PS01350">
    <property type="entry name" value="ISPF"/>
    <property type="match status" value="1"/>
</dbReference>
<accession>Q13Z30</accession>
<gene>
    <name evidence="1" type="primary">ispF</name>
    <name type="ordered locus">Bxeno_A2121</name>
    <name type="ORF">Bxe_A2311</name>
</gene>
<reference key="1">
    <citation type="journal article" date="2006" name="Proc. Natl. Acad. Sci. U.S.A.">
        <title>Burkholderia xenovorans LB400 harbors a multi-replicon, 9.73-Mbp genome shaped for versatility.</title>
        <authorList>
            <person name="Chain P.S.G."/>
            <person name="Denef V.J."/>
            <person name="Konstantinidis K.T."/>
            <person name="Vergez L.M."/>
            <person name="Agullo L."/>
            <person name="Reyes V.L."/>
            <person name="Hauser L."/>
            <person name="Cordova M."/>
            <person name="Gomez L."/>
            <person name="Gonzalez M."/>
            <person name="Land M."/>
            <person name="Lao V."/>
            <person name="Larimer F."/>
            <person name="LiPuma J.J."/>
            <person name="Mahenthiralingam E."/>
            <person name="Malfatti S.A."/>
            <person name="Marx C.J."/>
            <person name="Parnell J.J."/>
            <person name="Ramette A."/>
            <person name="Richardson P."/>
            <person name="Seeger M."/>
            <person name="Smith D."/>
            <person name="Spilker T."/>
            <person name="Sul W.J."/>
            <person name="Tsoi T.V."/>
            <person name="Ulrich L.E."/>
            <person name="Zhulin I.B."/>
            <person name="Tiedje J.M."/>
        </authorList>
    </citation>
    <scope>NUCLEOTIDE SEQUENCE [LARGE SCALE GENOMIC DNA]</scope>
    <source>
        <strain>LB400</strain>
    </source>
</reference>
<sequence>MDFRIGQGYDVHALVPGRPLIIGGVTIPYERGLLGHSDADVLLHAITDALFGAAAMGDIGRHFSDTDAKFAGADSRVLLRECFARVTAAGFSIANVDSSVVAQAPKLAPHIEGMRANIAADLGLPVERVNVKAKTNEKLGYLGRGEGIEAQAAVLLIRN</sequence>
<comment type="function">
    <text evidence="1">Involved in the biosynthesis of isopentenyl diphosphate (IPP) and dimethylallyl diphosphate (DMAPP), two major building blocks of isoprenoid compounds. Catalyzes the conversion of 4-diphosphocytidyl-2-C-methyl-D-erythritol 2-phosphate (CDP-ME2P) to 2-C-methyl-D-erythritol 2,4-cyclodiphosphate (ME-CPP) with a corresponding release of cytidine 5-monophosphate (CMP).</text>
</comment>
<comment type="catalytic activity">
    <reaction evidence="1">
        <text>4-CDP-2-C-methyl-D-erythritol 2-phosphate = 2-C-methyl-D-erythritol 2,4-cyclic diphosphate + CMP</text>
        <dbReference type="Rhea" id="RHEA:23864"/>
        <dbReference type="ChEBI" id="CHEBI:57919"/>
        <dbReference type="ChEBI" id="CHEBI:58483"/>
        <dbReference type="ChEBI" id="CHEBI:60377"/>
        <dbReference type="EC" id="4.6.1.12"/>
    </reaction>
</comment>
<comment type="cofactor">
    <cofactor evidence="1">
        <name>a divalent metal cation</name>
        <dbReference type="ChEBI" id="CHEBI:60240"/>
    </cofactor>
    <text evidence="1">Binds 1 divalent metal cation per subunit.</text>
</comment>
<comment type="pathway">
    <text evidence="1">Isoprenoid biosynthesis; isopentenyl diphosphate biosynthesis via DXP pathway; isopentenyl diphosphate from 1-deoxy-D-xylulose 5-phosphate: step 4/6.</text>
</comment>
<comment type="subunit">
    <text evidence="1">Homotrimer.</text>
</comment>
<comment type="similarity">
    <text evidence="1">Belongs to the IspF family.</text>
</comment>
<proteinExistence type="inferred from homology"/>
<feature type="chain" id="PRO_1000022818" description="2-C-methyl-D-erythritol 2,4-cyclodiphosphate synthase">
    <location>
        <begin position="1"/>
        <end position="159"/>
    </location>
</feature>
<feature type="binding site" evidence="1">
    <location>
        <begin position="10"/>
        <end position="12"/>
    </location>
    <ligand>
        <name>4-CDP-2-C-methyl-D-erythritol 2-phosphate</name>
        <dbReference type="ChEBI" id="CHEBI:57919"/>
    </ligand>
</feature>
<feature type="binding site" evidence="1">
    <location>
        <position position="10"/>
    </location>
    <ligand>
        <name>a divalent metal cation</name>
        <dbReference type="ChEBI" id="CHEBI:60240"/>
    </ligand>
</feature>
<feature type="binding site" evidence="1">
    <location>
        <position position="12"/>
    </location>
    <ligand>
        <name>a divalent metal cation</name>
        <dbReference type="ChEBI" id="CHEBI:60240"/>
    </ligand>
</feature>
<feature type="binding site" evidence="1">
    <location>
        <begin position="36"/>
        <end position="37"/>
    </location>
    <ligand>
        <name>4-CDP-2-C-methyl-D-erythritol 2-phosphate</name>
        <dbReference type="ChEBI" id="CHEBI:57919"/>
    </ligand>
</feature>
<feature type="binding site" evidence="1">
    <location>
        <position position="44"/>
    </location>
    <ligand>
        <name>a divalent metal cation</name>
        <dbReference type="ChEBI" id="CHEBI:60240"/>
    </ligand>
</feature>
<feature type="binding site" evidence="1">
    <location>
        <begin position="58"/>
        <end position="60"/>
    </location>
    <ligand>
        <name>4-CDP-2-C-methyl-D-erythritol 2-phosphate</name>
        <dbReference type="ChEBI" id="CHEBI:57919"/>
    </ligand>
</feature>
<feature type="binding site" evidence="1">
    <location>
        <begin position="63"/>
        <end position="67"/>
    </location>
    <ligand>
        <name>4-CDP-2-C-methyl-D-erythritol 2-phosphate</name>
        <dbReference type="ChEBI" id="CHEBI:57919"/>
    </ligand>
</feature>
<feature type="binding site" evidence="1">
    <location>
        <position position="144"/>
    </location>
    <ligand>
        <name>4-CDP-2-C-methyl-D-erythritol 2-phosphate</name>
        <dbReference type="ChEBI" id="CHEBI:57919"/>
    </ligand>
</feature>
<feature type="site" description="Transition state stabilizer" evidence="1">
    <location>
        <position position="36"/>
    </location>
</feature>
<feature type="site" description="Transition state stabilizer" evidence="1">
    <location>
        <position position="135"/>
    </location>
</feature>
<name>ISPF_PARXL</name>